<organism>
    <name type="scientific">Helicobacter pylori (strain J99 / ATCC 700824)</name>
    <name type="common">Campylobacter pylori J99</name>
    <dbReference type="NCBI Taxonomy" id="85963"/>
    <lineage>
        <taxon>Bacteria</taxon>
        <taxon>Pseudomonadati</taxon>
        <taxon>Campylobacterota</taxon>
        <taxon>Epsilonproteobacteria</taxon>
        <taxon>Campylobacterales</taxon>
        <taxon>Helicobacteraceae</taxon>
        <taxon>Helicobacter</taxon>
    </lineage>
</organism>
<evidence type="ECO:0000255" key="1">
    <source>
        <dbReference type="PROSITE-ProRule" id="PRU00434"/>
    </source>
</evidence>
<evidence type="ECO:0000305" key="2"/>
<accession>Q9ZKW3</accession>
<sequence>MVLEVKNLSFKYSQKLILDKLSFSVPKNSITSILAPNGSGKTTLLKCLLGLLKPLEETEIKACNKDILPLKPYEKAKLIAYIPQVEYYAFNFSVLDFVLMGKATHLNLFAMPKAKHIKEATSVLERLDLESLKDQGINDLSGGQRQMVLLARSLLQRTPLLLLDEPTSALDLKNQALFFDAIKDEMKKRELSVLVNIHDPNLVARHSTHVVMLKDKKLFLQASTPIAMTSHNLSALYDTPLEAIWHDDKLVVYAL</sequence>
<proteinExistence type="inferred from homology"/>
<protein>
    <recommendedName>
        <fullName>Probable iron chelatin transport ATP-binding protein jhp_0821</fullName>
    </recommendedName>
</protein>
<keyword id="KW-0067">ATP-binding</keyword>
<keyword id="KW-0997">Cell inner membrane</keyword>
<keyword id="KW-1003">Cell membrane</keyword>
<keyword id="KW-0406">Ion transport</keyword>
<keyword id="KW-0408">Iron</keyword>
<keyword id="KW-0410">Iron transport</keyword>
<keyword id="KW-0472">Membrane</keyword>
<keyword id="KW-0547">Nucleotide-binding</keyword>
<keyword id="KW-0813">Transport</keyword>
<comment type="function">
    <text evidence="2">Part of a binding-protein-dependent transport system for an iron chelatin. Probably responsible for energy coupling to the transport system (Potential).</text>
</comment>
<comment type="subcellular location">
    <subcellularLocation>
        <location evidence="2">Cell inner membrane</location>
        <topology evidence="2">Peripheral membrane protein</topology>
    </subcellularLocation>
</comment>
<comment type="similarity">
    <text evidence="2">Belongs to the ABC transporter superfamily.</text>
</comment>
<feature type="chain" id="PRO_0000093211" description="Probable iron chelatin transport ATP-binding protein jhp_0821">
    <location>
        <begin position="1"/>
        <end position="255"/>
    </location>
</feature>
<feature type="domain" description="ABC transporter" evidence="1">
    <location>
        <begin position="3"/>
        <end position="240"/>
    </location>
</feature>
<feature type="binding site" evidence="1">
    <location>
        <begin position="35"/>
        <end position="42"/>
    </location>
    <ligand>
        <name>ATP</name>
        <dbReference type="ChEBI" id="CHEBI:30616"/>
    </ligand>
</feature>
<reference key="1">
    <citation type="journal article" date="1999" name="Nature">
        <title>Genomic sequence comparison of two unrelated isolates of the human gastric pathogen Helicobacter pylori.</title>
        <authorList>
            <person name="Alm R.A."/>
            <person name="Ling L.-S.L."/>
            <person name="Moir D.T."/>
            <person name="King B.L."/>
            <person name="Brown E.D."/>
            <person name="Doig P.C."/>
            <person name="Smith D.R."/>
            <person name="Noonan B."/>
            <person name="Guild B.C."/>
            <person name="deJonge B.L."/>
            <person name="Carmel G."/>
            <person name="Tummino P.J."/>
            <person name="Caruso A."/>
            <person name="Uria-Nickelsen M."/>
            <person name="Mills D.M."/>
            <person name="Ives C."/>
            <person name="Gibson R."/>
            <person name="Merberg D."/>
            <person name="Mills S.D."/>
            <person name="Jiang Q."/>
            <person name="Taylor D.E."/>
            <person name="Vovis G.F."/>
            <person name="Trust T.J."/>
        </authorList>
    </citation>
    <scope>NUCLEOTIDE SEQUENCE [LARGE SCALE GENOMIC DNA]</scope>
    <source>
        <strain>J99 / ATCC 700824</strain>
    </source>
</reference>
<name>Y888_HELPJ</name>
<dbReference type="EMBL" id="AE001439">
    <property type="protein sequence ID" value="AAD06401.1"/>
    <property type="molecule type" value="Genomic_DNA"/>
</dbReference>
<dbReference type="PIR" id="G71884">
    <property type="entry name" value="G71884"/>
</dbReference>
<dbReference type="RefSeq" id="WP_000242348.1">
    <property type="nucleotide sequence ID" value="NZ_CP011330.1"/>
</dbReference>
<dbReference type="SMR" id="Q9ZKW3"/>
<dbReference type="KEGG" id="hpj:jhp_0821"/>
<dbReference type="PATRIC" id="fig|85963.30.peg.150"/>
<dbReference type="eggNOG" id="COG1120">
    <property type="taxonomic scope" value="Bacteria"/>
</dbReference>
<dbReference type="Proteomes" id="UP000000804">
    <property type="component" value="Chromosome"/>
</dbReference>
<dbReference type="GO" id="GO:0005886">
    <property type="term" value="C:plasma membrane"/>
    <property type="evidence" value="ECO:0007669"/>
    <property type="project" value="UniProtKB-SubCell"/>
</dbReference>
<dbReference type="GO" id="GO:0005524">
    <property type="term" value="F:ATP binding"/>
    <property type="evidence" value="ECO:0007669"/>
    <property type="project" value="UniProtKB-KW"/>
</dbReference>
<dbReference type="GO" id="GO:0016887">
    <property type="term" value="F:ATP hydrolysis activity"/>
    <property type="evidence" value="ECO:0007669"/>
    <property type="project" value="InterPro"/>
</dbReference>
<dbReference type="GO" id="GO:0006826">
    <property type="term" value="P:iron ion transport"/>
    <property type="evidence" value="ECO:0007669"/>
    <property type="project" value="UniProtKB-KW"/>
</dbReference>
<dbReference type="CDD" id="cd03214">
    <property type="entry name" value="ABC_Iron-Siderophores_B12_Hemin"/>
    <property type="match status" value="1"/>
</dbReference>
<dbReference type="FunFam" id="3.40.50.300:FF:000775">
    <property type="entry name" value="Iron(III) dicitrate ABC transporter, ATP-binding protein"/>
    <property type="match status" value="1"/>
</dbReference>
<dbReference type="Gene3D" id="3.40.50.300">
    <property type="entry name" value="P-loop containing nucleotide triphosphate hydrolases"/>
    <property type="match status" value="1"/>
</dbReference>
<dbReference type="InterPro" id="IPR003593">
    <property type="entry name" value="AAA+_ATPase"/>
</dbReference>
<dbReference type="InterPro" id="IPR003439">
    <property type="entry name" value="ABC_transporter-like_ATP-bd"/>
</dbReference>
<dbReference type="InterPro" id="IPR017871">
    <property type="entry name" value="ABC_transporter-like_CS"/>
</dbReference>
<dbReference type="InterPro" id="IPR050153">
    <property type="entry name" value="Metal_Ion_Import_ABC"/>
</dbReference>
<dbReference type="InterPro" id="IPR027417">
    <property type="entry name" value="P-loop_NTPase"/>
</dbReference>
<dbReference type="PANTHER" id="PTHR42734">
    <property type="entry name" value="METAL TRANSPORT SYSTEM ATP-BINDING PROTEIN TM_0124-RELATED"/>
    <property type="match status" value="1"/>
</dbReference>
<dbReference type="PANTHER" id="PTHR42734:SF6">
    <property type="entry name" value="MOLYBDATE IMPORT ATP-BINDING PROTEIN MOLC"/>
    <property type="match status" value="1"/>
</dbReference>
<dbReference type="Pfam" id="PF00005">
    <property type="entry name" value="ABC_tran"/>
    <property type="match status" value="1"/>
</dbReference>
<dbReference type="SMART" id="SM00382">
    <property type="entry name" value="AAA"/>
    <property type="match status" value="1"/>
</dbReference>
<dbReference type="SUPFAM" id="SSF52540">
    <property type="entry name" value="P-loop containing nucleoside triphosphate hydrolases"/>
    <property type="match status" value="1"/>
</dbReference>
<dbReference type="PROSITE" id="PS00211">
    <property type="entry name" value="ABC_TRANSPORTER_1"/>
    <property type="match status" value="1"/>
</dbReference>
<dbReference type="PROSITE" id="PS50893">
    <property type="entry name" value="ABC_TRANSPORTER_2"/>
    <property type="match status" value="1"/>
</dbReference>
<gene>
    <name type="ordered locus">jhp_0821</name>
</gene>